<sequence>MKKNTDSEMDQRLGYKFLVPDPKAGVFYRPLHFQYVSYSNFILHRLHEILTVKRPLLSFKNNTERIMIEISNVKVTPPDYSPIIASIKGKSYDALATFTVNIFKEVMTKEGISITKISSYEGKDSHLIKIPLLIGYGNKNPLDTAKYLVPNVIGGVFINKQSVEKVGINLVEKITTWPKFRVVKPNSFTFSFSSVSPPNVLPTRYRHYKISLDISQLEALNISSTKTFITVNIVLLSQYLSRVSLEFIRRSLSYDMPPEVVYLVNAIIDSAKRITESITDFNIDTYINDLVEAEHIKQKSQLTINEFKYEMLHNFLPHMNYTPDQLKGFYMISLLRKFLYCIYHTSRYPDRDSMVCHRILTYGKYFETLAHDELENYIGNIRNDIMNNHKNRGTYAVNIHVLTTPGLNHAFSSLLSGKFKKSDGSYRTHPHYSWMQNISIPRSVGFYPDQVKISKMFSVRKYHPSQYLYFCSSDVPERGPQVGLVSQLSVLSSITNILTSEYLDLEKKICEYIRSYYKDDISYFETGFPITIENALVASLNPNMICDFVTDFRRRKRMGFFGNLEVGITLVRDHMNEIRINIGAGRLVRPFLVVDNGELMMDVCPELESRLDDMTFSDIQKEFPHVIEMVDIEQFTFSNVCESVQKFRMMSKDERKQYDLCDFPAEFRDGYVASSLVGINHNSGPRAILGCAQAKQAISCLSSDIRNKIDNGIHLMYPERPIVISKALETSKIAANCFGQHVTIALMSYKGINQEDGIIIKKQFIQRGGLDIVTAKKHQVEIPLENFNNKERDRSNAYSKLESNGLVRLNAFLESGDAMARNISSRTLEDDFARDNQISFDVSEKYTDMYKSRVERVQVELTDKVKVRVLTMKERRPILGDKFTTRTSQKGTVAYVADETELPYDENGITPDVIINSTSIFSRKTISMLIEVILTAAYSAKPYNNKGENRPVCFPSSNETSIDTYMQFAKQCYEHSNPKLSDEELSDKIFCEKILYDPETDKPYASKVFFGPIYYLRLRHLTQDKATVRCRGKKTKLIRQANEGRKRGGGIKFGEMERDCLIAHGAANTITEVLKDSEEDYQDVYVCENCGDIAAQIKGINTCLRCSKLNLSPLLTKIDTTHVSKVFLTQMNARGVKVKLDFERRPPSFYKPLDKVDLKPSFLV</sequence>
<reference key="1">
    <citation type="journal article" date="1990" name="Virology">
        <title>The complete DNA sequence of vaccinia virus.</title>
        <authorList>
            <person name="Goebel S.J."/>
            <person name="Johnson G.P."/>
            <person name="Perkus M.E."/>
            <person name="Davis S.W."/>
            <person name="Winslow J.P."/>
            <person name="Paoletti E."/>
        </authorList>
    </citation>
    <scope>NUCLEOTIDE SEQUENCE [LARGE SCALE GENOMIC DNA]</scope>
</reference>
<reference key="2">
    <citation type="journal article" date="1990" name="Virology">
        <title>Appendix to 'The complete DNA sequence of vaccinia virus'.</title>
        <authorList>
            <person name="Goebel S.J."/>
            <person name="Johnson G.P."/>
            <person name="Perkus M.E."/>
            <person name="Davis S.W."/>
            <person name="Winslow J.P."/>
            <person name="Paoletti E."/>
        </authorList>
    </citation>
    <scope>NUCLEOTIDE SEQUENCE [LARGE SCALE GENOMIC DNA]</scope>
</reference>
<reference key="3">
    <citation type="journal article" date="2003" name="J. Gen. Virol.">
        <title>Vaccinia virus transcription.</title>
        <authorList>
            <person name="Broyles S.S."/>
        </authorList>
    </citation>
    <scope>REVIEW</scope>
</reference>
<accession>P68694</accession>
<accession>P19798</accession>
<protein>
    <recommendedName>
        <fullName>DNA-directed RNA polymerase 133 kDa polypeptide</fullName>
        <ecNumber>2.7.7.6</ecNumber>
    </recommendedName>
</protein>
<name>RP132_VACCC</name>
<comment type="function">
    <text evidence="1">Part of the DNA-dependent RNA polymerase which catalyzes the transcription of viral DNA into RNA using the four ribonucleoside triphosphates as substrates. Responsible for the transcription of early, intermediate and late genes. DNA-dependent RNA polymerase associates with the early transcription factor (ETF), itself composed of OPG118 and OPG133, thereby allowing the early genes transcription. Late transcription, and probably also intermediate transcription, require newly synthesized RNA polymerase.</text>
</comment>
<comment type="catalytic activity">
    <reaction evidence="1">
        <text>RNA(n) + a ribonucleoside 5'-triphosphate = RNA(n+1) + diphosphate</text>
        <dbReference type="Rhea" id="RHEA:21248"/>
        <dbReference type="Rhea" id="RHEA-COMP:14527"/>
        <dbReference type="Rhea" id="RHEA-COMP:17342"/>
        <dbReference type="ChEBI" id="CHEBI:33019"/>
        <dbReference type="ChEBI" id="CHEBI:61557"/>
        <dbReference type="ChEBI" id="CHEBI:140395"/>
        <dbReference type="EC" id="2.7.7.6"/>
    </reaction>
</comment>
<comment type="subunit">
    <text evidence="1">The DNA-dependent RNA polymerase used for intermediate and late genes expression consists of eight subunits 147 kDa, 133 kDa, 35 kDa, 30 kDa, 22 kDa, 19 kDa, 18 kDa and 7 kDa totalling more than 500 kDa in mass. The same holoenzyme, with the addition of the transcription-specificity factor RAP94, is used for early gene expression.</text>
</comment>
<comment type="subcellular location">
    <subcellularLocation>
        <location evidence="1">Virion</location>
    </subcellularLocation>
    <text evidence="1">All the enzymes and other proteins required to synthesize early mRNAs are packaged within the virion core along with the DNA genome. This is necessary because viral early mRNAs are synthesized within minutes after virus entry into the cell and are extruded through pores in the core particle.</text>
</comment>
<comment type="similarity">
    <text evidence="2">Belongs to the RNA polymerase beta chain family.</text>
</comment>
<organismHost>
    <name type="scientific">Homo sapiens</name>
    <name type="common">Human</name>
    <dbReference type="NCBI Taxonomy" id="9606"/>
</organismHost>
<gene>
    <name type="primary">OPG151</name>
    <name type="synonym">RPO132</name>
    <name type="ORF">A24R</name>
</gene>
<organism>
    <name type="scientific">Vaccinia virus (strain Copenhagen)</name>
    <name type="common">VACV</name>
    <dbReference type="NCBI Taxonomy" id="10249"/>
    <lineage>
        <taxon>Viruses</taxon>
        <taxon>Varidnaviria</taxon>
        <taxon>Bamfordvirae</taxon>
        <taxon>Nucleocytoviricota</taxon>
        <taxon>Pokkesviricetes</taxon>
        <taxon>Chitovirales</taxon>
        <taxon>Poxviridae</taxon>
        <taxon>Chordopoxvirinae</taxon>
        <taxon>Orthopoxvirus</taxon>
        <taxon>Vaccinia virus</taxon>
    </lineage>
</organism>
<feature type="chain" id="PRO_0000048059" description="DNA-directed RNA polymerase 133 kDa polypeptide">
    <location>
        <begin position="1"/>
        <end position="1164"/>
    </location>
</feature>
<keyword id="KW-0002">3D-structure</keyword>
<keyword id="KW-0240">DNA-directed RNA polymerase</keyword>
<keyword id="KW-0479">Metal-binding</keyword>
<keyword id="KW-0548">Nucleotidyltransferase</keyword>
<keyword id="KW-0597">Phosphoprotein</keyword>
<keyword id="KW-1185">Reference proteome</keyword>
<keyword id="KW-0804">Transcription</keyword>
<keyword id="KW-0808">Transferase</keyword>
<keyword id="KW-0946">Virion</keyword>
<evidence type="ECO:0000250" key="1">
    <source>
        <dbReference type="UniProtKB" id="Q76ZP7"/>
    </source>
</evidence>
<evidence type="ECO:0000305" key="2"/>
<dbReference type="EC" id="2.7.7.6"/>
<dbReference type="EMBL" id="M35027">
    <property type="protein sequence ID" value="AAA48148.1"/>
    <property type="molecule type" value="Genomic_DNA"/>
</dbReference>
<dbReference type="PIR" id="H42519">
    <property type="entry name" value="RNVZ8T"/>
</dbReference>
<dbReference type="PDB" id="8P0J">
    <property type="method" value="EM"/>
    <property type="resolution" value="2.39 A"/>
    <property type="chains" value="B=1-1164"/>
</dbReference>
<dbReference type="PDB" id="8P0K">
    <property type="method" value="EM"/>
    <property type="resolution" value="2.64 A"/>
    <property type="chains" value="B=1-1164"/>
</dbReference>
<dbReference type="PDB" id="8P0N">
    <property type="method" value="EM"/>
    <property type="resolution" value="2.58 A"/>
    <property type="chains" value="B=1-1164"/>
</dbReference>
<dbReference type="PDB" id="8RQK">
    <property type="method" value="EM"/>
    <property type="resolution" value="2.65 A"/>
    <property type="chains" value="B=1-1164"/>
</dbReference>
<dbReference type="PDBsum" id="8P0J"/>
<dbReference type="PDBsum" id="8P0K"/>
<dbReference type="PDBsum" id="8P0N"/>
<dbReference type="PDBsum" id="8RQK"/>
<dbReference type="EMDB" id="EMD-17334"/>
<dbReference type="EMDB" id="EMD-17335"/>
<dbReference type="EMDB" id="EMD-17336"/>
<dbReference type="EMDB" id="EMD-19442"/>
<dbReference type="SMR" id="P68694"/>
<dbReference type="Proteomes" id="UP000008269">
    <property type="component" value="Segment"/>
</dbReference>
<dbReference type="GO" id="GO:0000428">
    <property type="term" value="C:DNA-directed RNA polymerase complex"/>
    <property type="evidence" value="ECO:0007669"/>
    <property type="project" value="UniProtKB-KW"/>
</dbReference>
<dbReference type="GO" id="GO:0044423">
    <property type="term" value="C:virion component"/>
    <property type="evidence" value="ECO:0007669"/>
    <property type="project" value="UniProtKB-KW"/>
</dbReference>
<dbReference type="GO" id="GO:0003677">
    <property type="term" value="F:DNA binding"/>
    <property type="evidence" value="ECO:0007669"/>
    <property type="project" value="InterPro"/>
</dbReference>
<dbReference type="GO" id="GO:0003899">
    <property type="term" value="F:DNA-directed RNA polymerase activity"/>
    <property type="evidence" value="ECO:0007669"/>
    <property type="project" value="UniProtKB-EC"/>
</dbReference>
<dbReference type="GO" id="GO:0046872">
    <property type="term" value="F:metal ion binding"/>
    <property type="evidence" value="ECO:0007669"/>
    <property type="project" value="UniProtKB-KW"/>
</dbReference>
<dbReference type="GO" id="GO:0032549">
    <property type="term" value="F:ribonucleoside binding"/>
    <property type="evidence" value="ECO:0007669"/>
    <property type="project" value="InterPro"/>
</dbReference>
<dbReference type="GO" id="GO:0006351">
    <property type="term" value="P:DNA-templated transcription"/>
    <property type="evidence" value="ECO:0007669"/>
    <property type="project" value="InterPro"/>
</dbReference>
<dbReference type="Gene3D" id="2.40.50.150">
    <property type="match status" value="1"/>
</dbReference>
<dbReference type="Gene3D" id="3.90.1100.10">
    <property type="match status" value="2"/>
</dbReference>
<dbReference type="Gene3D" id="2.40.270.10">
    <property type="entry name" value="DNA-directed RNA polymerase, subunit 2, domain 6"/>
    <property type="match status" value="1"/>
</dbReference>
<dbReference type="Gene3D" id="3.90.1800.10">
    <property type="entry name" value="RNA polymerase alpha subunit dimerisation domain"/>
    <property type="match status" value="1"/>
</dbReference>
<dbReference type="InterPro" id="IPR015712">
    <property type="entry name" value="DNA-dir_RNA_pol_su2"/>
</dbReference>
<dbReference type="InterPro" id="IPR007120">
    <property type="entry name" value="DNA-dir_RNAP_su2_dom"/>
</dbReference>
<dbReference type="InterPro" id="IPR037033">
    <property type="entry name" value="DNA-dir_RNAP_su2_hyb_sf"/>
</dbReference>
<dbReference type="InterPro" id="IPR024390">
    <property type="entry name" value="RNA_pol_132_poxvirus"/>
</dbReference>
<dbReference type="InterPro" id="IPR007121">
    <property type="entry name" value="RNA_pol_bsu_CS"/>
</dbReference>
<dbReference type="InterPro" id="IPR007645">
    <property type="entry name" value="RNA_pol_Rpb2_3"/>
</dbReference>
<dbReference type="InterPro" id="IPR007647">
    <property type="entry name" value="RNA_pol_Rpb2_5"/>
</dbReference>
<dbReference type="InterPro" id="IPR007641">
    <property type="entry name" value="RNA_pol_Rpb2_7"/>
</dbReference>
<dbReference type="InterPro" id="IPR014724">
    <property type="entry name" value="RNA_pol_RPB2_OB-fold"/>
</dbReference>
<dbReference type="PANTHER" id="PTHR20856">
    <property type="entry name" value="DNA-DIRECTED RNA POLYMERASE I SUBUNIT 2"/>
    <property type="match status" value="1"/>
</dbReference>
<dbReference type="Pfam" id="PF04565">
    <property type="entry name" value="RNA_pol_Rpb2_3"/>
    <property type="match status" value="1"/>
</dbReference>
<dbReference type="Pfam" id="PF04567">
    <property type="entry name" value="RNA_pol_Rpb2_5"/>
    <property type="match status" value="1"/>
</dbReference>
<dbReference type="Pfam" id="PF00562">
    <property type="entry name" value="RNA_pol_Rpb2_6"/>
    <property type="match status" value="1"/>
</dbReference>
<dbReference type="Pfam" id="PF04560">
    <property type="entry name" value="RNA_pol_Rpb2_7"/>
    <property type="match status" value="1"/>
</dbReference>
<dbReference type="Pfam" id="PF12415">
    <property type="entry name" value="rpo132"/>
    <property type="match status" value="1"/>
</dbReference>
<dbReference type="SUPFAM" id="SSF64484">
    <property type="entry name" value="beta and beta-prime subunits of DNA dependent RNA-polymerase"/>
    <property type="match status" value="1"/>
</dbReference>
<dbReference type="PROSITE" id="PS01166">
    <property type="entry name" value="RNA_POL_BETA"/>
    <property type="match status" value="1"/>
</dbReference>
<proteinExistence type="evidence at protein level"/>